<comment type="function">
    <text evidence="1">Converts heme B (protoheme IX) to heme O by substitution of the vinyl group on carbon 2 of heme B porphyrin ring with a hydroxyethyl farnesyl side group.</text>
</comment>
<comment type="catalytic activity">
    <reaction evidence="1">
        <text>heme b + (2E,6E)-farnesyl diphosphate + H2O = Fe(II)-heme o + diphosphate</text>
        <dbReference type="Rhea" id="RHEA:28070"/>
        <dbReference type="ChEBI" id="CHEBI:15377"/>
        <dbReference type="ChEBI" id="CHEBI:33019"/>
        <dbReference type="ChEBI" id="CHEBI:60344"/>
        <dbReference type="ChEBI" id="CHEBI:60530"/>
        <dbReference type="ChEBI" id="CHEBI:175763"/>
        <dbReference type="EC" id="2.5.1.141"/>
    </reaction>
</comment>
<comment type="pathway">
    <text evidence="1">Porphyrin-containing compound metabolism; heme O biosynthesis; heme O from protoheme: step 1/1.</text>
</comment>
<comment type="subunit">
    <text evidence="1">Interacts with CtaA.</text>
</comment>
<comment type="subcellular location">
    <subcellularLocation>
        <location evidence="1">Cell membrane</location>
        <topology evidence="1">Multi-pass membrane protein</topology>
    </subcellularLocation>
</comment>
<comment type="miscellaneous">
    <text evidence="1">Carbon 2 of the heme B porphyrin ring is defined according to the Fischer nomenclature.</text>
</comment>
<comment type="similarity">
    <text evidence="1">Belongs to the UbiA prenyltransferase family. Protoheme IX farnesyltransferase subfamily.</text>
</comment>
<reference key="1">
    <citation type="journal article" date="2008" name="Chem. Biol. Interact.">
        <title>Extending the Bacillus cereus group genomics to putative food-borne pathogens of different toxicity.</title>
        <authorList>
            <person name="Lapidus A."/>
            <person name="Goltsman E."/>
            <person name="Auger S."/>
            <person name="Galleron N."/>
            <person name="Segurens B."/>
            <person name="Dossat C."/>
            <person name="Land M.L."/>
            <person name="Broussolle V."/>
            <person name="Brillard J."/>
            <person name="Guinebretiere M.-H."/>
            <person name="Sanchis V."/>
            <person name="Nguen-the C."/>
            <person name="Lereclus D."/>
            <person name="Richardson P."/>
            <person name="Wincker P."/>
            <person name="Weissenbach J."/>
            <person name="Ehrlich S.D."/>
            <person name="Sorokin A."/>
        </authorList>
    </citation>
    <scope>NUCLEOTIDE SEQUENCE [LARGE SCALE GENOMIC DNA]</scope>
    <source>
        <strain>KBAB4</strain>
    </source>
</reference>
<proteinExistence type="inferred from homology"/>
<feature type="chain" id="PRO_0000346026" description="Protoheme IX farnesyltransferase">
    <location>
        <begin position="1"/>
        <end position="307"/>
    </location>
</feature>
<feature type="transmembrane region" description="Helical" evidence="1">
    <location>
        <begin position="32"/>
        <end position="52"/>
    </location>
</feature>
<feature type="transmembrane region" description="Helical" evidence="1">
    <location>
        <begin position="65"/>
        <end position="85"/>
    </location>
</feature>
<feature type="transmembrane region" description="Helical" evidence="1">
    <location>
        <begin position="108"/>
        <end position="128"/>
    </location>
</feature>
<feature type="transmembrane region" description="Helical" evidence="1">
    <location>
        <begin position="131"/>
        <end position="151"/>
    </location>
</feature>
<feature type="transmembrane region" description="Helical" evidence="1">
    <location>
        <begin position="158"/>
        <end position="178"/>
    </location>
</feature>
<feature type="transmembrane region" description="Helical" evidence="1">
    <location>
        <begin position="186"/>
        <end position="206"/>
    </location>
</feature>
<feature type="transmembrane region" description="Helical" evidence="1">
    <location>
        <begin position="251"/>
        <end position="271"/>
    </location>
</feature>
<feature type="transmembrane region" description="Helical" evidence="1">
    <location>
        <begin position="287"/>
        <end position="307"/>
    </location>
</feature>
<organism>
    <name type="scientific">Bacillus mycoides (strain KBAB4)</name>
    <name type="common">Bacillus weihenstephanensis</name>
    <dbReference type="NCBI Taxonomy" id="315730"/>
    <lineage>
        <taxon>Bacteria</taxon>
        <taxon>Bacillati</taxon>
        <taxon>Bacillota</taxon>
        <taxon>Bacilli</taxon>
        <taxon>Bacillales</taxon>
        <taxon>Bacillaceae</taxon>
        <taxon>Bacillus</taxon>
        <taxon>Bacillus cereus group</taxon>
    </lineage>
</organism>
<dbReference type="EC" id="2.5.1.141" evidence="1"/>
<dbReference type="EMBL" id="CP000903">
    <property type="protein sequence ID" value="ABY44940.1"/>
    <property type="molecule type" value="Genomic_DNA"/>
</dbReference>
<dbReference type="SMR" id="A9VUA6"/>
<dbReference type="KEGG" id="bwe:BcerKBAB4_3771"/>
<dbReference type="eggNOG" id="COG0109">
    <property type="taxonomic scope" value="Bacteria"/>
</dbReference>
<dbReference type="HOGENOM" id="CLU_029631_0_0_9"/>
<dbReference type="UniPathway" id="UPA00834">
    <property type="reaction ID" value="UER00712"/>
</dbReference>
<dbReference type="Proteomes" id="UP000002154">
    <property type="component" value="Chromosome"/>
</dbReference>
<dbReference type="GO" id="GO:0005886">
    <property type="term" value="C:plasma membrane"/>
    <property type="evidence" value="ECO:0007669"/>
    <property type="project" value="UniProtKB-SubCell"/>
</dbReference>
<dbReference type="GO" id="GO:0008495">
    <property type="term" value="F:protoheme IX farnesyltransferase activity"/>
    <property type="evidence" value="ECO:0007669"/>
    <property type="project" value="UniProtKB-UniRule"/>
</dbReference>
<dbReference type="GO" id="GO:0048034">
    <property type="term" value="P:heme O biosynthetic process"/>
    <property type="evidence" value="ECO:0007669"/>
    <property type="project" value="UniProtKB-UniRule"/>
</dbReference>
<dbReference type="CDD" id="cd13957">
    <property type="entry name" value="PT_UbiA_Cox10"/>
    <property type="match status" value="1"/>
</dbReference>
<dbReference type="FunFam" id="1.10.357.140:FF:000001">
    <property type="entry name" value="Protoheme IX farnesyltransferase"/>
    <property type="match status" value="1"/>
</dbReference>
<dbReference type="Gene3D" id="1.10.357.140">
    <property type="entry name" value="UbiA prenyltransferase"/>
    <property type="match status" value="1"/>
</dbReference>
<dbReference type="HAMAP" id="MF_00154">
    <property type="entry name" value="CyoE_CtaB"/>
    <property type="match status" value="1"/>
</dbReference>
<dbReference type="InterPro" id="IPR006369">
    <property type="entry name" value="Protohaem_IX_farnesylTrfase"/>
</dbReference>
<dbReference type="InterPro" id="IPR000537">
    <property type="entry name" value="UbiA_prenyltransferase"/>
</dbReference>
<dbReference type="InterPro" id="IPR030470">
    <property type="entry name" value="UbiA_prenylTrfase_CS"/>
</dbReference>
<dbReference type="InterPro" id="IPR044878">
    <property type="entry name" value="UbiA_sf"/>
</dbReference>
<dbReference type="NCBIfam" id="TIGR01473">
    <property type="entry name" value="cyoE_ctaB"/>
    <property type="match status" value="1"/>
</dbReference>
<dbReference type="PANTHER" id="PTHR43448">
    <property type="entry name" value="PROTOHEME IX FARNESYLTRANSFERASE, MITOCHONDRIAL"/>
    <property type="match status" value="1"/>
</dbReference>
<dbReference type="PANTHER" id="PTHR43448:SF2">
    <property type="entry name" value="PROTOHEME IX FARNESYLTRANSFERASE, MITOCHONDRIAL"/>
    <property type="match status" value="1"/>
</dbReference>
<dbReference type="Pfam" id="PF01040">
    <property type="entry name" value="UbiA"/>
    <property type="match status" value="1"/>
</dbReference>
<dbReference type="PROSITE" id="PS00943">
    <property type="entry name" value="UBIA"/>
    <property type="match status" value="1"/>
</dbReference>
<name>COXX_BACMK</name>
<gene>
    <name evidence="1" type="primary">ctaB</name>
    <name type="ordered locus">BcerKBAB4_3771</name>
</gene>
<accession>A9VUA6</accession>
<sequence>MNHATSELHDESAVSIVPETTRLQDLSALVKMGIVNSNTLTVFTGFWLALHFNGLSVMDNLDKLFFTIVGSALIMAGVCCLNNYIDRDIDPLMERTKNRPTVTGKYKPGFALAFGLVILLLGFVFLLLTTPMAVLISFIGAFTYVVLYTLWTKRKYTLNTVVGSISGAVPPLIGWAAIDPSLNHPIAWMLFLIMFIWQIPHFLALAMKRVDEYRNAGIPMLPVVQGFDITKRQIMIWTVCLLPLPFYMSGLGITFMVIATLLNIGWIALGLYGFRQQDDIKWSVKMFVYSLNYLTILFVSMIVVTFF</sequence>
<keyword id="KW-1003">Cell membrane</keyword>
<keyword id="KW-0350">Heme biosynthesis</keyword>
<keyword id="KW-0472">Membrane</keyword>
<keyword id="KW-0808">Transferase</keyword>
<keyword id="KW-0812">Transmembrane</keyword>
<keyword id="KW-1133">Transmembrane helix</keyword>
<protein>
    <recommendedName>
        <fullName evidence="1">Protoheme IX farnesyltransferase</fullName>
        <ecNumber evidence="1">2.5.1.141</ecNumber>
    </recommendedName>
    <alternativeName>
        <fullName evidence="1">Heme B farnesyltransferase</fullName>
    </alternativeName>
    <alternativeName>
        <fullName evidence="1">Heme O synthase</fullName>
    </alternativeName>
</protein>
<evidence type="ECO:0000255" key="1">
    <source>
        <dbReference type="HAMAP-Rule" id="MF_00154"/>
    </source>
</evidence>